<organism>
    <name type="scientific">Mycobacterium bovis (strain ATCC BAA-935 / AF2122/97)</name>
    <dbReference type="NCBI Taxonomy" id="233413"/>
    <lineage>
        <taxon>Bacteria</taxon>
        <taxon>Bacillati</taxon>
        <taxon>Actinomycetota</taxon>
        <taxon>Actinomycetes</taxon>
        <taxon>Mycobacteriales</taxon>
        <taxon>Mycobacteriaceae</taxon>
        <taxon>Mycobacterium</taxon>
        <taxon>Mycobacterium tuberculosis complex</taxon>
    </lineage>
</organism>
<gene>
    <name type="ordered locus">BQ2027_MB2915</name>
</gene>
<evidence type="ECO:0000255" key="1"/>
<evidence type="ECO:0000256" key="2">
    <source>
        <dbReference type="SAM" id="MobiDB-lite"/>
    </source>
</evidence>
<protein>
    <recommendedName>
        <fullName>Uncharacterized protein Mb2915</fullName>
    </recommendedName>
</protein>
<accession>P65048</accession>
<accession>A0A1R3Y3A7</accession>
<accession>Q10812</accession>
<accession>X2BLU3</accession>
<dbReference type="EMBL" id="LT708304">
    <property type="protein sequence ID" value="SIU01536.1"/>
    <property type="molecule type" value="Genomic_DNA"/>
</dbReference>
<dbReference type="RefSeq" id="NP_856560.1">
    <property type="nucleotide sequence ID" value="NC_002945.3"/>
</dbReference>
<dbReference type="SMR" id="P65048"/>
<dbReference type="KEGG" id="mbo:BQ2027_MB2915"/>
<dbReference type="Proteomes" id="UP000001419">
    <property type="component" value="Chromosome"/>
</dbReference>
<dbReference type="GO" id="GO:0004222">
    <property type="term" value="F:metalloendopeptidase activity"/>
    <property type="evidence" value="ECO:0007669"/>
    <property type="project" value="TreeGrafter"/>
</dbReference>
<dbReference type="CDD" id="cd12797">
    <property type="entry name" value="M23_peptidase"/>
    <property type="match status" value="1"/>
</dbReference>
<dbReference type="Gene3D" id="2.70.70.10">
    <property type="entry name" value="Glucose Permease (Domain IIA)"/>
    <property type="match status" value="1"/>
</dbReference>
<dbReference type="InterPro" id="IPR050570">
    <property type="entry name" value="Cell_wall_metabolism_enzyme"/>
</dbReference>
<dbReference type="InterPro" id="IPR011055">
    <property type="entry name" value="Dup_hybrid_motif"/>
</dbReference>
<dbReference type="InterPro" id="IPR016047">
    <property type="entry name" value="Peptidase_M23"/>
</dbReference>
<dbReference type="PANTHER" id="PTHR21666:SF289">
    <property type="entry name" value="L-ALA--D-GLU ENDOPEPTIDASE"/>
    <property type="match status" value="1"/>
</dbReference>
<dbReference type="PANTHER" id="PTHR21666">
    <property type="entry name" value="PEPTIDASE-RELATED"/>
    <property type="match status" value="1"/>
</dbReference>
<dbReference type="Pfam" id="PF01551">
    <property type="entry name" value="Peptidase_M23"/>
    <property type="match status" value="1"/>
</dbReference>
<dbReference type="SUPFAM" id="SSF51261">
    <property type="entry name" value="Duplicated hybrid motif"/>
    <property type="match status" value="1"/>
</dbReference>
<name>Y2915_MYCBO</name>
<feature type="signal peptide" evidence="1">
    <location>
        <begin position="1"/>
        <end position="36"/>
    </location>
</feature>
<feature type="chain" id="PRO_0000014148" description="Uncharacterized protein Mb2915">
    <location>
        <begin position="37"/>
        <end position="249"/>
    </location>
</feature>
<feature type="region of interest" description="Disordered" evidence="2">
    <location>
        <begin position="227"/>
        <end position="249"/>
    </location>
</feature>
<keyword id="KW-1185">Reference proteome</keyword>
<keyword id="KW-0732">Signal</keyword>
<proteinExistence type="inferred from homology"/>
<reference key="1">
    <citation type="journal article" date="2003" name="Proc. Natl. Acad. Sci. U.S.A.">
        <title>The complete genome sequence of Mycobacterium bovis.</title>
        <authorList>
            <person name="Garnier T."/>
            <person name="Eiglmeier K."/>
            <person name="Camus J.-C."/>
            <person name="Medina N."/>
            <person name="Mansoor H."/>
            <person name="Pryor M."/>
            <person name="Duthoy S."/>
            <person name="Grondin S."/>
            <person name="Lacroix C."/>
            <person name="Monsempe C."/>
            <person name="Simon S."/>
            <person name="Harris B."/>
            <person name="Atkin R."/>
            <person name="Doggett J."/>
            <person name="Mayes R."/>
            <person name="Keating L."/>
            <person name="Wheeler P.R."/>
            <person name="Parkhill J."/>
            <person name="Barrell B.G."/>
            <person name="Cole S.T."/>
            <person name="Gordon S.V."/>
            <person name="Hewinson R.G."/>
        </authorList>
    </citation>
    <scope>NUCLEOTIDE SEQUENCE [LARGE SCALE GENOMIC DNA]</scope>
    <source>
        <strain>ATCC BAA-935 / AF2122/97</strain>
    </source>
</reference>
<reference key="2">
    <citation type="journal article" date="2017" name="Genome Announc.">
        <title>Updated reference genome sequence and annotation of Mycobacterium bovis AF2122/97.</title>
        <authorList>
            <person name="Malone K.M."/>
            <person name="Farrell D."/>
            <person name="Stuber T.P."/>
            <person name="Schubert O.T."/>
            <person name="Aebersold R."/>
            <person name="Robbe-Austerman S."/>
            <person name="Gordon S.V."/>
        </authorList>
    </citation>
    <scope>NUCLEOTIDE SEQUENCE [LARGE SCALE GENOMIC DNA]</scope>
    <scope>GENOME REANNOTATION</scope>
    <source>
        <strain>ATCC BAA-935 / AF2122/97</strain>
    </source>
</reference>
<sequence length="249" mass="25807">MAKSPARRCTAKVRRVLSRSVLILCWSLLGAAPAHADDSRLGWPLRPPPAVVRQFDAASPNWNPGHRGVDLAGRPGQPVYAAGSATVVFAGLLAGRPVVSLAHPGGLRTSYEPVVAQVRVGQPVSAPTVIGALAAGHPGCQAAACLHWGAMWGPASGANYVDPLGLLKSTPIRLKPLSSEGRTLHYRQAEPVFVNEAAAGALAGAGHRKSPKQGVFRGAAQGGDIVARQPPGRWVCPSSAGGPIGWHRQ</sequence>